<dbReference type="EMBL" id="BA000035">
    <property type="protein sequence ID" value="BAC18767.1"/>
    <property type="molecule type" value="Genomic_DNA"/>
</dbReference>
<dbReference type="RefSeq" id="WP_006767953.1">
    <property type="nucleotide sequence ID" value="NC_004369.1"/>
</dbReference>
<dbReference type="SMR" id="Q8FP33"/>
<dbReference type="STRING" id="196164.gene:10742385"/>
<dbReference type="KEGG" id="cef:CE1957"/>
<dbReference type="eggNOG" id="COG0806">
    <property type="taxonomic scope" value="Bacteria"/>
</dbReference>
<dbReference type="HOGENOM" id="CLU_077636_0_0_11"/>
<dbReference type="OrthoDB" id="5381335at2"/>
<dbReference type="Proteomes" id="UP000001409">
    <property type="component" value="Chromosome"/>
</dbReference>
<dbReference type="GO" id="GO:0005737">
    <property type="term" value="C:cytoplasm"/>
    <property type="evidence" value="ECO:0007669"/>
    <property type="project" value="UniProtKB-SubCell"/>
</dbReference>
<dbReference type="GO" id="GO:0005840">
    <property type="term" value="C:ribosome"/>
    <property type="evidence" value="ECO:0007669"/>
    <property type="project" value="InterPro"/>
</dbReference>
<dbReference type="GO" id="GO:0043022">
    <property type="term" value="F:ribosome binding"/>
    <property type="evidence" value="ECO:0007669"/>
    <property type="project" value="InterPro"/>
</dbReference>
<dbReference type="GO" id="GO:0042274">
    <property type="term" value="P:ribosomal small subunit biogenesis"/>
    <property type="evidence" value="ECO:0007669"/>
    <property type="project" value="UniProtKB-UniRule"/>
</dbReference>
<dbReference type="GO" id="GO:0006364">
    <property type="term" value="P:rRNA processing"/>
    <property type="evidence" value="ECO:0007669"/>
    <property type="project" value="UniProtKB-UniRule"/>
</dbReference>
<dbReference type="Gene3D" id="2.30.30.240">
    <property type="entry name" value="PRC-barrel domain"/>
    <property type="match status" value="1"/>
</dbReference>
<dbReference type="Gene3D" id="2.40.30.60">
    <property type="entry name" value="RimM"/>
    <property type="match status" value="1"/>
</dbReference>
<dbReference type="HAMAP" id="MF_00014">
    <property type="entry name" value="Ribosome_mat_RimM"/>
    <property type="match status" value="1"/>
</dbReference>
<dbReference type="InterPro" id="IPR011033">
    <property type="entry name" value="PRC_barrel-like_sf"/>
</dbReference>
<dbReference type="InterPro" id="IPR056792">
    <property type="entry name" value="PRC_RimM"/>
</dbReference>
<dbReference type="InterPro" id="IPR011961">
    <property type="entry name" value="RimM"/>
</dbReference>
<dbReference type="InterPro" id="IPR002676">
    <property type="entry name" value="RimM_N"/>
</dbReference>
<dbReference type="InterPro" id="IPR036976">
    <property type="entry name" value="RimM_N_sf"/>
</dbReference>
<dbReference type="InterPro" id="IPR009000">
    <property type="entry name" value="Transl_B-barrel_sf"/>
</dbReference>
<dbReference type="NCBIfam" id="TIGR02273">
    <property type="entry name" value="16S_RimM"/>
    <property type="match status" value="1"/>
</dbReference>
<dbReference type="PANTHER" id="PTHR33692">
    <property type="entry name" value="RIBOSOME MATURATION FACTOR RIMM"/>
    <property type="match status" value="1"/>
</dbReference>
<dbReference type="PANTHER" id="PTHR33692:SF1">
    <property type="entry name" value="RIBOSOME MATURATION FACTOR RIMM"/>
    <property type="match status" value="1"/>
</dbReference>
<dbReference type="Pfam" id="PF24986">
    <property type="entry name" value="PRC_RimM"/>
    <property type="match status" value="1"/>
</dbReference>
<dbReference type="Pfam" id="PF01782">
    <property type="entry name" value="RimM"/>
    <property type="match status" value="1"/>
</dbReference>
<dbReference type="SUPFAM" id="SSF50346">
    <property type="entry name" value="PRC-barrel domain"/>
    <property type="match status" value="1"/>
</dbReference>
<dbReference type="SUPFAM" id="SSF50447">
    <property type="entry name" value="Translation proteins"/>
    <property type="match status" value="1"/>
</dbReference>
<keyword id="KW-0143">Chaperone</keyword>
<keyword id="KW-0963">Cytoplasm</keyword>
<keyword id="KW-1185">Reference proteome</keyword>
<keyword id="KW-0690">Ribosome biogenesis</keyword>
<keyword id="KW-0698">rRNA processing</keyword>
<sequence length="169" mass="18488">MTTELQIGRVIKSHGIRGEVVVEVTTDDPDIRYAPGEVLHGRQTGREHTLTIDTARAHQGRLLIKFEEIPDRTAADSLRGTRFFAPPLEREDDEEGFYDHELEGLRIIHDGADIGVVTGVMHGPAGEILEVELTSGKEVLIPFVHAIVPEVDLEAGTATITPPDGLLDL</sequence>
<evidence type="ECO:0000255" key="1">
    <source>
        <dbReference type="HAMAP-Rule" id="MF_00014"/>
    </source>
</evidence>
<feature type="chain" id="PRO_0000163281" description="Ribosome maturation factor RimM">
    <location>
        <begin position="1"/>
        <end position="169"/>
    </location>
</feature>
<feature type="domain" description="PRC barrel" evidence="1">
    <location>
        <begin position="94"/>
        <end position="166"/>
    </location>
</feature>
<comment type="function">
    <text evidence="1">An accessory protein needed during the final step in the assembly of 30S ribosomal subunit, possibly for assembly of the head region. Essential for efficient processing of 16S rRNA. May be needed both before and after RbfA during the maturation of 16S rRNA. It has affinity for free ribosomal 30S subunits but not for 70S ribosomes.</text>
</comment>
<comment type="subunit">
    <text evidence="1">Binds ribosomal protein uS19.</text>
</comment>
<comment type="subcellular location">
    <subcellularLocation>
        <location evidence="1">Cytoplasm</location>
    </subcellularLocation>
</comment>
<comment type="domain">
    <text evidence="1">The PRC barrel domain binds ribosomal protein uS19.</text>
</comment>
<comment type="similarity">
    <text evidence="1">Belongs to the RimM family.</text>
</comment>
<protein>
    <recommendedName>
        <fullName evidence="1">Ribosome maturation factor RimM</fullName>
    </recommendedName>
</protein>
<gene>
    <name evidence="1" type="primary">rimM</name>
    <name type="ordered locus">CE1957</name>
</gene>
<organism>
    <name type="scientific">Corynebacterium efficiens (strain DSM 44549 / YS-314 / AJ 12310 / JCM 11189 / NBRC 100395)</name>
    <dbReference type="NCBI Taxonomy" id="196164"/>
    <lineage>
        <taxon>Bacteria</taxon>
        <taxon>Bacillati</taxon>
        <taxon>Actinomycetota</taxon>
        <taxon>Actinomycetes</taxon>
        <taxon>Mycobacteriales</taxon>
        <taxon>Corynebacteriaceae</taxon>
        <taxon>Corynebacterium</taxon>
    </lineage>
</organism>
<reference key="1">
    <citation type="journal article" date="2003" name="Genome Res.">
        <title>Comparative complete genome sequence analysis of the amino acid replacements responsible for the thermostability of Corynebacterium efficiens.</title>
        <authorList>
            <person name="Nishio Y."/>
            <person name="Nakamura Y."/>
            <person name="Kawarabayasi Y."/>
            <person name="Usuda Y."/>
            <person name="Kimura E."/>
            <person name="Sugimoto S."/>
            <person name="Matsui K."/>
            <person name="Yamagishi A."/>
            <person name="Kikuchi H."/>
            <person name="Ikeo K."/>
            <person name="Gojobori T."/>
        </authorList>
    </citation>
    <scope>NUCLEOTIDE SEQUENCE [LARGE SCALE GENOMIC DNA]</scope>
    <source>
        <strain>DSM 44549 / YS-314 / AJ 12310 / JCM 11189 / NBRC 100395</strain>
    </source>
</reference>
<accession>Q8FP33</accession>
<name>RIMM_COREF</name>
<proteinExistence type="inferred from homology"/>